<dbReference type="EMBL" id="X07973">
    <property type="protein sequence ID" value="CAA30785.1"/>
    <property type="molecule type" value="Genomic_DNA"/>
</dbReference>
<dbReference type="PIR" id="S00809">
    <property type="entry name" value="S00809"/>
</dbReference>
<dbReference type="SMR" id="P09577"/>
<dbReference type="Proteomes" id="UP000002356">
    <property type="component" value="Unplaced"/>
</dbReference>
<dbReference type="GO" id="GO:0005737">
    <property type="term" value="C:cytoplasm"/>
    <property type="evidence" value="ECO:0000250"/>
    <property type="project" value="UniProtKB"/>
</dbReference>
<dbReference type="GO" id="GO:0005634">
    <property type="term" value="C:nucleus"/>
    <property type="evidence" value="ECO:0000250"/>
    <property type="project" value="UniProtKB"/>
</dbReference>
<dbReference type="GO" id="GO:0008270">
    <property type="term" value="F:zinc ion binding"/>
    <property type="evidence" value="ECO:0000250"/>
    <property type="project" value="UniProtKB"/>
</dbReference>
<dbReference type="GO" id="GO:0071276">
    <property type="term" value="P:cellular response to cadmium ion"/>
    <property type="evidence" value="ECO:0007669"/>
    <property type="project" value="TreeGrafter"/>
</dbReference>
<dbReference type="GO" id="GO:0071280">
    <property type="term" value="P:cellular response to copper ion"/>
    <property type="evidence" value="ECO:0007669"/>
    <property type="project" value="TreeGrafter"/>
</dbReference>
<dbReference type="GO" id="GO:0071294">
    <property type="term" value="P:cellular response to zinc ion"/>
    <property type="evidence" value="ECO:0000250"/>
    <property type="project" value="UniProtKB"/>
</dbReference>
<dbReference type="GO" id="GO:0010273">
    <property type="term" value="P:detoxification of copper ion"/>
    <property type="evidence" value="ECO:0007669"/>
    <property type="project" value="TreeGrafter"/>
</dbReference>
<dbReference type="GO" id="GO:0006882">
    <property type="term" value="P:intracellular zinc ion homeostasis"/>
    <property type="evidence" value="ECO:0007669"/>
    <property type="project" value="TreeGrafter"/>
</dbReference>
<dbReference type="GO" id="GO:0045926">
    <property type="term" value="P:negative regulation of growth"/>
    <property type="evidence" value="ECO:0000250"/>
    <property type="project" value="UniProtKB"/>
</dbReference>
<dbReference type="FunFam" id="4.10.10.10:FF:000001">
    <property type="entry name" value="Metallothionein"/>
    <property type="match status" value="1"/>
</dbReference>
<dbReference type="Gene3D" id="4.10.10.10">
    <property type="entry name" value="Metallothionein Isoform II"/>
    <property type="match status" value="1"/>
</dbReference>
<dbReference type="InterPro" id="IPR017854">
    <property type="entry name" value="Metalthion_dom_sf"/>
</dbReference>
<dbReference type="InterPro" id="IPR023587">
    <property type="entry name" value="Metalthion_dom_sf_vert"/>
</dbReference>
<dbReference type="InterPro" id="IPR000006">
    <property type="entry name" value="Metalthion_vert"/>
</dbReference>
<dbReference type="InterPro" id="IPR018064">
    <property type="entry name" value="Metalthion_vert_metal_BS"/>
</dbReference>
<dbReference type="PANTHER" id="PTHR23299">
    <property type="entry name" value="METALLOTHIONEIN"/>
    <property type="match status" value="1"/>
</dbReference>
<dbReference type="PANTHER" id="PTHR23299:SF22">
    <property type="entry name" value="METALLOTHIONEIN-1G"/>
    <property type="match status" value="1"/>
</dbReference>
<dbReference type="Pfam" id="PF00131">
    <property type="entry name" value="Metallothio"/>
    <property type="match status" value="1"/>
</dbReference>
<dbReference type="PRINTS" id="PR00860">
    <property type="entry name" value="MTVERTEBRATE"/>
</dbReference>
<dbReference type="SUPFAM" id="SSF57868">
    <property type="entry name" value="Metallothionein"/>
    <property type="match status" value="1"/>
</dbReference>
<dbReference type="PROSITE" id="PS00203">
    <property type="entry name" value="METALLOTHIONEIN_VRT"/>
    <property type="match status" value="1"/>
</dbReference>
<protein>
    <recommendedName>
        <fullName>Metallothionein-1B</fullName>
        <shortName>MT-1B</shortName>
    </recommendedName>
    <alternativeName>
        <fullName>Metallothionein-IB</fullName>
        <shortName>MT-IB</shortName>
    </alternativeName>
</protein>
<organism>
    <name type="scientific">Ovis aries</name>
    <name type="common">Sheep</name>
    <dbReference type="NCBI Taxonomy" id="9940"/>
    <lineage>
        <taxon>Eukaryota</taxon>
        <taxon>Metazoa</taxon>
        <taxon>Chordata</taxon>
        <taxon>Craniata</taxon>
        <taxon>Vertebrata</taxon>
        <taxon>Euteleostomi</taxon>
        <taxon>Mammalia</taxon>
        <taxon>Eutheria</taxon>
        <taxon>Laurasiatheria</taxon>
        <taxon>Artiodactyla</taxon>
        <taxon>Ruminantia</taxon>
        <taxon>Pecora</taxon>
        <taxon>Bovidae</taxon>
        <taxon>Caprinae</taxon>
        <taxon>Ovis</taxon>
    </lineage>
</organism>
<sequence>MDPNCSCPTSGSCSCAGSCTCKACRCPSCKKSCCSCCPVGCAKCAQGCVCKGASDKCSCCA</sequence>
<proteinExistence type="inferred from homology"/>
<feature type="chain" id="PRO_0000197228" description="Metallothionein-1B">
    <location>
        <begin position="1"/>
        <end position="61"/>
    </location>
</feature>
<feature type="region of interest" description="Beta">
    <location>
        <begin position="1"/>
        <end position="29"/>
    </location>
</feature>
<feature type="region of interest" description="Alpha">
    <location>
        <begin position="30"/>
        <end position="61"/>
    </location>
</feature>
<feature type="binding site" evidence="1">
    <location>
        <position position="5"/>
    </location>
    <ligand>
        <name>a divalent metal cation</name>
        <dbReference type="ChEBI" id="CHEBI:60240"/>
        <label>1</label>
        <note>in cluster B</note>
    </ligand>
</feature>
<feature type="binding site" evidence="1">
    <location>
        <position position="7"/>
    </location>
    <ligand>
        <name>a divalent metal cation</name>
        <dbReference type="ChEBI" id="CHEBI:60240"/>
        <label>1</label>
        <note>in cluster B</note>
    </ligand>
</feature>
<feature type="binding site" evidence="1">
    <location>
        <position position="7"/>
    </location>
    <ligand>
        <name>a divalent metal cation</name>
        <dbReference type="ChEBI" id="CHEBI:60240"/>
        <label>2</label>
        <note>in cluster B</note>
    </ligand>
</feature>
<feature type="binding site" evidence="1">
    <location>
        <position position="13"/>
    </location>
    <ligand>
        <name>a divalent metal cation</name>
        <dbReference type="ChEBI" id="CHEBI:60240"/>
        <label>2</label>
        <note>in cluster B</note>
    </ligand>
</feature>
<feature type="binding site" evidence="1">
    <location>
        <position position="15"/>
    </location>
    <ligand>
        <name>a divalent metal cation</name>
        <dbReference type="ChEBI" id="CHEBI:60240"/>
        <label>2</label>
        <note>in cluster B</note>
    </ligand>
</feature>
<feature type="binding site" evidence="1">
    <location>
        <position position="15"/>
    </location>
    <ligand>
        <name>a divalent metal cation</name>
        <dbReference type="ChEBI" id="CHEBI:60240"/>
        <label>3</label>
        <note>in cluster B</note>
    </ligand>
</feature>
<feature type="binding site" evidence="1">
    <location>
        <position position="19"/>
    </location>
    <ligand>
        <name>a divalent metal cation</name>
        <dbReference type="ChEBI" id="CHEBI:60240"/>
        <label>3</label>
        <note>in cluster B</note>
    </ligand>
</feature>
<feature type="binding site" evidence="1">
    <location>
        <position position="21"/>
    </location>
    <ligand>
        <name>a divalent metal cation</name>
        <dbReference type="ChEBI" id="CHEBI:60240"/>
        <label>1</label>
        <note>in cluster B</note>
    </ligand>
</feature>
<feature type="binding site" evidence="1">
    <location>
        <position position="24"/>
    </location>
    <ligand>
        <name>a divalent metal cation</name>
        <dbReference type="ChEBI" id="CHEBI:60240"/>
        <label>1</label>
        <note>in cluster B</note>
    </ligand>
</feature>
<feature type="binding site" evidence="1">
    <location>
        <position position="24"/>
    </location>
    <ligand>
        <name>a divalent metal cation</name>
        <dbReference type="ChEBI" id="CHEBI:60240"/>
        <label>3</label>
        <note>in cluster B</note>
    </ligand>
</feature>
<feature type="binding site" evidence="1">
    <location>
        <position position="26"/>
    </location>
    <ligand>
        <name>a divalent metal cation</name>
        <dbReference type="ChEBI" id="CHEBI:60240"/>
        <label>2</label>
        <note>in cluster B</note>
    </ligand>
</feature>
<feature type="binding site" evidence="1">
    <location>
        <position position="29"/>
    </location>
    <ligand>
        <name>a divalent metal cation</name>
        <dbReference type="ChEBI" id="CHEBI:60240"/>
        <label>3</label>
        <note>in cluster B</note>
    </ligand>
</feature>
<feature type="binding site" evidence="1">
    <location>
        <position position="33"/>
    </location>
    <ligand>
        <name>a divalent metal cation</name>
        <dbReference type="ChEBI" id="CHEBI:60240"/>
        <label>4</label>
        <note>in cluster A</note>
    </ligand>
</feature>
<feature type="binding site" evidence="1">
    <location>
        <position position="34"/>
    </location>
    <ligand>
        <name>a divalent metal cation</name>
        <dbReference type="ChEBI" id="CHEBI:60240"/>
        <label>4</label>
        <note>in cluster A</note>
    </ligand>
</feature>
<feature type="binding site" evidence="1">
    <location>
        <position position="34"/>
    </location>
    <ligand>
        <name>a divalent metal cation</name>
        <dbReference type="ChEBI" id="CHEBI:60240"/>
        <label>5</label>
        <note>in cluster A</note>
    </ligand>
</feature>
<feature type="binding site" evidence="1">
    <location>
        <position position="36"/>
    </location>
    <ligand>
        <name>a divalent metal cation</name>
        <dbReference type="ChEBI" id="CHEBI:60240"/>
        <label>5</label>
        <note>in cluster A</note>
    </ligand>
</feature>
<feature type="binding site" evidence="1">
    <location>
        <position position="37"/>
    </location>
    <ligand>
        <name>a divalent metal cation</name>
        <dbReference type="ChEBI" id="CHEBI:60240"/>
        <label>5</label>
        <note>in cluster A</note>
    </ligand>
</feature>
<feature type="binding site" evidence="1">
    <location>
        <position position="37"/>
    </location>
    <ligand>
        <name>a divalent metal cation</name>
        <dbReference type="ChEBI" id="CHEBI:60240"/>
        <label>6</label>
        <note>in cluster A</note>
    </ligand>
</feature>
<feature type="binding site" evidence="1">
    <location>
        <position position="41"/>
    </location>
    <ligand>
        <name>a divalent metal cation</name>
        <dbReference type="ChEBI" id="CHEBI:60240"/>
        <label>6</label>
        <note>in cluster A</note>
    </ligand>
</feature>
<feature type="binding site" evidence="1">
    <location>
        <position position="44"/>
    </location>
    <ligand>
        <name>a divalent metal cation</name>
        <dbReference type="ChEBI" id="CHEBI:60240"/>
        <label>4</label>
        <note>in cluster A</note>
    </ligand>
</feature>
<feature type="binding site" evidence="1">
    <location>
        <position position="44"/>
    </location>
    <ligand>
        <name>a divalent metal cation</name>
        <dbReference type="ChEBI" id="CHEBI:60240"/>
        <label>6</label>
        <note>in cluster A</note>
    </ligand>
</feature>
<feature type="binding site" evidence="1">
    <location>
        <position position="48"/>
    </location>
    <ligand>
        <name>a divalent metal cation</name>
        <dbReference type="ChEBI" id="CHEBI:60240"/>
        <label>4</label>
        <note>in cluster A</note>
    </ligand>
</feature>
<feature type="binding site" evidence="1">
    <location>
        <position position="50"/>
    </location>
    <ligand>
        <name>a divalent metal cation</name>
        <dbReference type="ChEBI" id="CHEBI:60240"/>
        <label>5</label>
        <note>in cluster A</note>
    </ligand>
</feature>
<feature type="binding site" evidence="1">
    <location>
        <position position="50"/>
    </location>
    <ligand>
        <name>a divalent metal cation</name>
        <dbReference type="ChEBI" id="CHEBI:60240"/>
        <label>7</label>
        <note>in cluster A</note>
    </ligand>
</feature>
<feature type="binding site" evidence="1">
    <location>
        <position position="57"/>
    </location>
    <ligand>
        <name>a divalent metal cation</name>
        <dbReference type="ChEBI" id="CHEBI:60240"/>
        <label>7</label>
        <note>in cluster A</note>
    </ligand>
</feature>
<feature type="binding site" evidence="1">
    <location>
        <position position="59"/>
    </location>
    <ligand>
        <name>a divalent metal cation</name>
        <dbReference type="ChEBI" id="CHEBI:60240"/>
        <label>7</label>
        <note>in cluster A</note>
    </ligand>
</feature>
<feature type="binding site" evidence="1">
    <location>
        <position position="60"/>
    </location>
    <ligand>
        <name>a divalent metal cation</name>
        <dbReference type="ChEBI" id="CHEBI:60240"/>
        <label>6</label>
        <note>in cluster A</note>
    </ligand>
</feature>
<feature type="binding site" evidence="1">
    <location>
        <position position="60"/>
    </location>
    <ligand>
        <name>a divalent metal cation</name>
        <dbReference type="ChEBI" id="CHEBI:60240"/>
        <label>7</label>
        <note>in cluster A</note>
    </ligand>
</feature>
<gene>
    <name type="primary">MT1B</name>
    <name type="synonym">MT-IB</name>
</gene>
<name>MT1B_SHEEP</name>
<reference key="1">
    <citation type="journal article" date="1988" name="Eur. J. Biochem.">
        <title>The sheep metallothionein gene family. Structure, sequence and evolutionary relationship of five linked genes.</title>
        <authorList>
            <person name="Peterson M.G."/>
            <person name="Hannan F."/>
            <person name="Mercer J.F.B."/>
        </authorList>
    </citation>
    <scope>NUCLEOTIDE SEQUENCE [GENOMIC DNA]</scope>
</reference>
<accession>P09577</accession>
<keyword id="KW-0479">Metal-binding</keyword>
<keyword id="KW-0480">Metal-thiolate cluster</keyword>
<keyword id="KW-1185">Reference proteome</keyword>
<evidence type="ECO:0000250" key="1">
    <source>
        <dbReference type="UniProtKB" id="P02795"/>
    </source>
</evidence>
<evidence type="ECO:0000305" key="2"/>
<comment type="function">
    <text>Metallothioneins have a high content of cysteine residues that bind various heavy metals; these proteins are transcriptionally regulated by both heavy metals and glucocorticoids.</text>
</comment>
<comment type="domain">
    <text>Class I metallothioneins contain 2 metal-binding domains: four divalent ions are chelated within cluster A of the alpha domain and are coordinated via cysteinyl thiolate bridges to 11 cysteine ligands. Cluster B, the corresponding region within the beta domain, can ligate three divalent ions to 9 cysteines.</text>
</comment>
<comment type="similarity">
    <text evidence="2">Belongs to the metallothionein superfamily. Type 1 family.</text>
</comment>